<sequence length="1790" mass="197356">MPTSDKSRQTSAGKSFFGRKLHKERPVEDRWDAHGSWESLAPPSSAAGSRSSRYSKRSSIQSVDFGADIDPSLLSTSAGPITSIPFESLSTDTQSPIPVDYLSKAETSPRKEPSPGHLAKGVGDFHQYPAWDPSAMRNHQQFSHPTGPRPPPHAAGVAMSSSATGDKGARYQQWGRPGSSAGNAGLSHHSSSTVDSSTNSRMSIDQASIHSSLSSNTRGSSYISTDGSSRTTLPSHSNDRSNYYAAMNSGRGSSAQGAIPPAQPRVQNTEQYLTRPRDDRVVDQLFLELMQKRGWQNLPEQARRQMMAYPASKKWTLVHQDRLTELQGEQKRKQKARETHGYDGPSGILERADEEGSPEWYVKKVMDDTITSKQLASLSVSLRTQPISWVKAFVEAQGQIALTNVLVKINRKKVTGPVPAPPSGDKDLDREYDIVKCLKALMNNKYGADDALAHQQIIVALISSLLSPRLNTRKLVSEVLTFLCHWAEGQGHERVLQAMDHVKNHQGETGRFDAWMRIVEVTIDGRGKMGSLVGASEEYRSGGIGMENLLMEYAVSTMILINMLVDAPENDLQLRCHIRAQFISCGIKRLLSKMEGFQYEVIDKQIEHFRENEAIDYEDLLQRESSSTKDSIEGEVKDMTDPLQITDAIASRLNGTRAHDYFLSALQHLLLIRENSGEDGLRMYQLVDAMLSYVAMDRRLPDLDLRQGLTFTVQSLLDRLHTDAEARRAYDESLEARQIAEAALAERDEMKAQVELGADGLVRKLQKQIEEQTGIIELQSRQNEMLKAELADVQRLRAQELQRNELETRELYLMLRDAQDIAASNAKKSNMGEAETDPAHMRGILDREKLLTRLEKQLERTKTQFKLEGKVWGQHDPSDRLRELREQMDGDAGPREAFEEQARLNLSLNPVGSVYRKKTYIQGMEDTATEELGQTDDEVVYAKARLVDLHRPRMDPEQATGLLGEIAAKVPKIDADDAKDEGKPTESEQPAEGAATKGDEQGVDDTVAVDKATAAPPPPPPPPPAHPGLSGAAPPPPPPPPPPPPGAGAAPPPPPPPPPPPPGGLGGPPPPPPPPPPGGFGGPPPPPPPPGGFGGPPPPPPPPPGGAFGVPPPPPPPGTVIGGWRANYLASQGAPSHAIPVMSSIRPKKKLKALHWDKVDTPQVTVWATHGTTPQEKEEKYVELAKRGVLDEVERLFMAKETRIFGGGVAAKQRKDKKQIISNDLSKNFQIALSKFSQFPAEEVVRRIIHCDAEILDNMVVMEFLQRDEMCTVPENVSKLMAPYSKDWTGPDAANTEREQDPSELTREDQIYLYTAFELNHYWKARMRALALTRSFEPDYEHISAKLREVVRVSESLRDSVSLMNVLGLILDIGNFMNDANKQAQGFKLSSLARLGMVKDDKNETTFADLVERIVRNQYPEWEDFTEQISGVIGLQKLNVDQLRTDAKKYIDNIKNVQASLDAGNLSDPKKFHPQDRVSQITQRSMKDARRKAEQMQLYLEEMVKTYDDIMVFYGEDNTDDGARRDFFAKLAAFLQEWKKSKEKNIALEEARRRTEASLARKRINVGLANGAGAAGDAPVSPATSGAMDSLLEKLRAAAPQAKDQRDRRRRARLKERHQVRVASGQKIPDLEGAEAPGSGGQNSGATDTNATDSSLLSPTIQEPEGGSSPIASQSEDVADRAASMLQDMLRNSPDPERTRRRRESAEEERRKRRLRRRNGATSGSKDSNDTTPLSPVTEPTSTQGESAEPENLSLSSPPNGEDPTLNPPTIVLSSDASDTPDDEHRPSTS</sequence>
<protein>
    <recommendedName>
        <fullName>Cytokinesis protein sepA</fullName>
    </recommendedName>
    <alternativeName>
        <fullName>Forced expression inhibition of growth A</fullName>
    </alternativeName>
    <alternativeName>
        <fullName>Protein FH1/2</fullName>
    </alternativeName>
</protein>
<accession>P78621</accession>
<accession>C8V0K5</accession>
<accession>Q00760</accession>
<accession>Q5AYV7</accession>
<name>SEPA_EMENI</name>
<evidence type="ECO:0000250" key="1"/>
<evidence type="ECO:0000255" key="2"/>
<evidence type="ECO:0000255" key="3">
    <source>
        <dbReference type="PROSITE-ProRule" id="PRU00577"/>
    </source>
</evidence>
<evidence type="ECO:0000255" key="4">
    <source>
        <dbReference type="PROSITE-ProRule" id="PRU00579"/>
    </source>
</evidence>
<evidence type="ECO:0000255" key="5">
    <source>
        <dbReference type="PROSITE-ProRule" id="PRU00774"/>
    </source>
</evidence>
<evidence type="ECO:0000256" key="6">
    <source>
        <dbReference type="SAM" id="MobiDB-lite"/>
    </source>
</evidence>
<evidence type="ECO:0000269" key="7">
    <source>
    </source>
</evidence>
<evidence type="ECO:0000305" key="8"/>
<proteinExistence type="inferred from homology"/>
<organism>
    <name type="scientific">Emericella nidulans (strain FGSC A4 / ATCC 38163 / CBS 112.46 / NRRL 194 / M139)</name>
    <name type="common">Aspergillus nidulans</name>
    <dbReference type="NCBI Taxonomy" id="227321"/>
    <lineage>
        <taxon>Eukaryota</taxon>
        <taxon>Fungi</taxon>
        <taxon>Dikarya</taxon>
        <taxon>Ascomycota</taxon>
        <taxon>Pezizomycotina</taxon>
        <taxon>Eurotiomycetes</taxon>
        <taxon>Eurotiomycetidae</taxon>
        <taxon>Eurotiales</taxon>
        <taxon>Aspergillaceae</taxon>
        <taxon>Aspergillus</taxon>
        <taxon>Aspergillus subgen. Nidulantes</taxon>
    </lineage>
</organism>
<keyword id="KW-0131">Cell cycle</keyword>
<keyword id="KW-0132">Cell division</keyword>
<keyword id="KW-0175">Coiled coil</keyword>
<keyword id="KW-1185">Reference proteome</keyword>
<reference key="1">
    <citation type="journal article" date="1997" name="EMBO J.">
        <title>The Aspergillus nidulans sepA gene encodes an FH1/2 protein involved in cytokinesis and the maintenance of cellular polarity.</title>
        <authorList>
            <person name="Harris S.D."/>
            <person name="Hamer L."/>
            <person name="Sharpless K.E."/>
            <person name="Hamer J.E."/>
        </authorList>
    </citation>
    <scope>NUCLEOTIDE SEQUENCE [GENOMIC DNA]</scope>
</reference>
<reference key="2">
    <citation type="submission" date="2001-03" db="EMBL/GenBank/DDBJ databases">
        <authorList>
            <person name="Hamer L."/>
            <person name="Harris S.D."/>
            <person name="Sharpless K.E."/>
            <person name="Hamer J.E."/>
        </authorList>
    </citation>
    <scope>SEQUENCE REVISION TO 143-153; 207; 1071-1109 AND 1644</scope>
</reference>
<reference key="3">
    <citation type="journal article" date="2005" name="Nature">
        <title>Sequencing of Aspergillus nidulans and comparative analysis with A. fumigatus and A. oryzae.</title>
        <authorList>
            <person name="Galagan J.E."/>
            <person name="Calvo S.E."/>
            <person name="Cuomo C."/>
            <person name="Ma L.-J."/>
            <person name="Wortman J.R."/>
            <person name="Batzoglou S."/>
            <person name="Lee S.-I."/>
            <person name="Bastuerkmen M."/>
            <person name="Spevak C.C."/>
            <person name="Clutterbuck J."/>
            <person name="Kapitonov V."/>
            <person name="Jurka J."/>
            <person name="Scazzocchio C."/>
            <person name="Farman M.L."/>
            <person name="Butler J."/>
            <person name="Purcell S."/>
            <person name="Harris S."/>
            <person name="Braus G.H."/>
            <person name="Draht O."/>
            <person name="Busch S."/>
            <person name="D'Enfert C."/>
            <person name="Bouchier C."/>
            <person name="Goldman G.H."/>
            <person name="Bell-Pedersen D."/>
            <person name="Griffiths-Jones S."/>
            <person name="Doonan J.H."/>
            <person name="Yu J."/>
            <person name="Vienken K."/>
            <person name="Pain A."/>
            <person name="Freitag M."/>
            <person name="Selker E.U."/>
            <person name="Archer D.B."/>
            <person name="Penalva M.A."/>
            <person name="Oakley B.R."/>
            <person name="Momany M."/>
            <person name="Tanaka T."/>
            <person name="Kumagai T."/>
            <person name="Asai K."/>
            <person name="Machida M."/>
            <person name="Nierman W.C."/>
            <person name="Denning D.W."/>
            <person name="Caddick M.X."/>
            <person name="Hynes M."/>
            <person name="Paoletti M."/>
            <person name="Fischer R."/>
            <person name="Miller B.L."/>
            <person name="Dyer P.S."/>
            <person name="Sachs M.S."/>
            <person name="Osmani S.A."/>
            <person name="Birren B.W."/>
        </authorList>
    </citation>
    <scope>NUCLEOTIDE SEQUENCE [LARGE SCALE GENOMIC DNA]</scope>
    <source>
        <strain>FGSC A4 / ATCC 38163 / CBS 112.46 / NRRL 194 / M139</strain>
    </source>
</reference>
<reference key="4">
    <citation type="journal article" date="2009" name="Fungal Genet. Biol.">
        <title>The 2008 update of the Aspergillus nidulans genome annotation: a community effort.</title>
        <authorList>
            <person name="Wortman J.R."/>
            <person name="Gilsenan J.M."/>
            <person name="Joardar V."/>
            <person name="Deegan J."/>
            <person name="Clutterbuck J."/>
            <person name="Andersen M.R."/>
            <person name="Archer D."/>
            <person name="Bencina M."/>
            <person name="Braus G."/>
            <person name="Coutinho P."/>
            <person name="von Dohren H."/>
            <person name="Doonan J."/>
            <person name="Driessen A.J."/>
            <person name="Durek P."/>
            <person name="Espeso E."/>
            <person name="Fekete E."/>
            <person name="Flipphi M."/>
            <person name="Estrada C.G."/>
            <person name="Geysens S."/>
            <person name="Goldman G."/>
            <person name="de Groot P.W."/>
            <person name="Hansen K."/>
            <person name="Harris S.D."/>
            <person name="Heinekamp T."/>
            <person name="Helmstaedt K."/>
            <person name="Henrissat B."/>
            <person name="Hofmann G."/>
            <person name="Homan T."/>
            <person name="Horio T."/>
            <person name="Horiuchi H."/>
            <person name="James S."/>
            <person name="Jones M."/>
            <person name="Karaffa L."/>
            <person name="Karanyi Z."/>
            <person name="Kato M."/>
            <person name="Keller N."/>
            <person name="Kelly D.E."/>
            <person name="Kiel J.A."/>
            <person name="Kim J.M."/>
            <person name="van der Klei I.J."/>
            <person name="Klis F.M."/>
            <person name="Kovalchuk A."/>
            <person name="Krasevec N."/>
            <person name="Kubicek C.P."/>
            <person name="Liu B."/>
            <person name="Maccabe A."/>
            <person name="Meyer V."/>
            <person name="Mirabito P."/>
            <person name="Miskei M."/>
            <person name="Mos M."/>
            <person name="Mullins J."/>
            <person name="Nelson D.R."/>
            <person name="Nielsen J."/>
            <person name="Oakley B.R."/>
            <person name="Osmani S.A."/>
            <person name="Pakula T."/>
            <person name="Paszewski A."/>
            <person name="Paulsen I."/>
            <person name="Pilsyk S."/>
            <person name="Pocsi I."/>
            <person name="Punt P.J."/>
            <person name="Ram A.F."/>
            <person name="Ren Q."/>
            <person name="Robellet X."/>
            <person name="Robson G."/>
            <person name="Seiboth B."/>
            <person name="van Solingen P."/>
            <person name="Specht T."/>
            <person name="Sun J."/>
            <person name="Taheri-Talesh N."/>
            <person name="Takeshita N."/>
            <person name="Ussery D."/>
            <person name="vanKuyk P.A."/>
            <person name="Visser H."/>
            <person name="van de Vondervoort P.J."/>
            <person name="de Vries R.P."/>
            <person name="Walton J."/>
            <person name="Xiang X."/>
            <person name="Xiong Y."/>
            <person name="Zeng A.P."/>
            <person name="Brandt B.W."/>
            <person name="Cornell M.J."/>
            <person name="van den Hondel C.A."/>
            <person name="Visser J."/>
            <person name="Oliver S.G."/>
            <person name="Turner G."/>
        </authorList>
    </citation>
    <scope>GENOME REANNOTATION</scope>
    <source>
        <strain>FGSC A4 / ATCC 38163 / CBS 112.46 / NRRL 194 / M139</strain>
    </source>
</reference>
<reference key="5">
    <citation type="journal article" date="1995" name="Genetics">
        <title>Identification of developmental regulatory genes in Aspergillus nidulans by overexpression.</title>
        <authorList>
            <person name="Marhoul J.F."/>
            <person name="Adams T.H."/>
        </authorList>
    </citation>
    <scope>NUCLEOTIDE SEQUENCE [GENOMIC DNA] OF 559-1790</scope>
    <scope>FUNCTION</scope>
    <source>
        <strain>FGSC 26</strain>
    </source>
</reference>
<gene>
    <name type="primary">sepA</name>
    <name type="synonym">figA</name>
    <name type="ORF">AN6523</name>
</gene>
<comment type="function">
    <text evidence="7">Involved in cytokinesis. Overexpression results in growth inhibition.</text>
</comment>
<comment type="domain">
    <text evidence="1">The DAD domain regulates activation via by an autoinhibitory interaction with the GBD/FH3 domain. This autoinhibition is released upon competitive binding of an activated GTPase. The release of DAD allows the FH2 domain to then nucleate and elongate nonbranched actin filaments (By similarity).</text>
</comment>
<comment type="similarity">
    <text evidence="8">Belongs to the formin homology family. BNI1 subfamily.</text>
</comment>
<comment type="sequence caution" evidence="8">
    <conflict type="erroneous gene model prediction">
        <sequence resource="EMBL-CDS" id="AAA33306"/>
    </conflict>
</comment>
<comment type="sequence caution" evidence="8">
    <conflict type="frameshift">
        <sequence resource="EMBL-CDS" id="AAA33306"/>
    </conflict>
</comment>
<comment type="sequence caution" evidence="8">
    <conflict type="erroneous gene model prediction">
        <sequence resource="EMBL-CDS" id="CBF70912"/>
    </conflict>
</comment>
<comment type="sequence caution" evidence="8">
    <conflict type="miscellaneous discrepancy">
        <sequence resource="EMBL-CDS" id="CBF70912"/>
    </conflict>
    <text>An additional intron is predicted in this sequence to correct a probable sequencing error.</text>
</comment>
<comment type="sequence caution" evidence="8">
    <conflict type="erroneous gene model prediction">
        <sequence resource="EMBL-CDS" id="EAA57863"/>
    </conflict>
</comment>
<comment type="sequence caution" evidence="8">
    <conflict type="miscellaneous discrepancy">
        <sequence resource="EMBL-CDS" id="EAA57863"/>
    </conflict>
    <text>An additional intron is predicted in this sequence to correct a probable sequencing error.</text>
</comment>
<dbReference type="EMBL" id="U83658">
    <property type="protein sequence ID" value="AAB63335.3"/>
    <property type="molecule type" value="Genomic_DNA"/>
</dbReference>
<dbReference type="EMBL" id="AACD01000109">
    <property type="protein sequence ID" value="EAA57863.1"/>
    <property type="status" value="ALT_SEQ"/>
    <property type="molecule type" value="Genomic_DNA"/>
</dbReference>
<dbReference type="EMBL" id="L36341">
    <property type="protein sequence ID" value="AAA33306.1"/>
    <property type="status" value="ALT_SEQ"/>
    <property type="molecule type" value="Genomic_DNA"/>
</dbReference>
<dbReference type="EMBL" id="BN001301">
    <property type="protein sequence ID" value="CBF70912.1"/>
    <property type="status" value="ALT_SEQ"/>
    <property type="molecule type" value="Genomic_DNA"/>
</dbReference>
<dbReference type="RefSeq" id="XP_664127.1">
    <property type="nucleotide sequence ID" value="XM_659035.1"/>
</dbReference>
<dbReference type="SMR" id="P78621"/>
<dbReference type="FunCoup" id="P78621">
    <property type="interactions" value="463"/>
</dbReference>
<dbReference type="STRING" id="227321.P78621"/>
<dbReference type="KEGG" id="ani:ANIA_06523"/>
<dbReference type="eggNOG" id="KOG1922">
    <property type="taxonomic scope" value="Eukaryota"/>
</dbReference>
<dbReference type="HOGENOM" id="CLU_001313_1_0_1"/>
<dbReference type="InParanoid" id="P78621"/>
<dbReference type="OrthoDB" id="1104827at2759"/>
<dbReference type="Proteomes" id="UP000000560">
    <property type="component" value="Chromosome I"/>
</dbReference>
<dbReference type="GO" id="GO:0043332">
    <property type="term" value="C:mating projection tip"/>
    <property type="evidence" value="ECO:0000318"/>
    <property type="project" value="GO_Central"/>
</dbReference>
<dbReference type="GO" id="GO:0110085">
    <property type="term" value="C:mitotic actomyosin contractile ring"/>
    <property type="evidence" value="ECO:0000318"/>
    <property type="project" value="GO_Central"/>
</dbReference>
<dbReference type="GO" id="GO:0051015">
    <property type="term" value="F:actin filament binding"/>
    <property type="evidence" value="ECO:0000318"/>
    <property type="project" value="GO_Central"/>
</dbReference>
<dbReference type="GO" id="GO:0031267">
    <property type="term" value="F:small GTPase binding"/>
    <property type="evidence" value="ECO:0007669"/>
    <property type="project" value="InterPro"/>
</dbReference>
<dbReference type="GO" id="GO:0051017">
    <property type="term" value="P:actin filament bundle assembly"/>
    <property type="evidence" value="ECO:0000318"/>
    <property type="project" value="GO_Central"/>
</dbReference>
<dbReference type="GO" id="GO:1903475">
    <property type="term" value="P:mitotic actomyosin contractile ring assembly"/>
    <property type="evidence" value="ECO:0000318"/>
    <property type="project" value="GO_Central"/>
</dbReference>
<dbReference type="FunFam" id="1.10.238.150:FF:000003">
    <property type="entry name" value="Cytokinesis protein SepA"/>
    <property type="match status" value="1"/>
</dbReference>
<dbReference type="FunFam" id="1.20.58.2220:FF:000006">
    <property type="entry name" value="Cytokinesis protein sepA"/>
    <property type="match status" value="1"/>
</dbReference>
<dbReference type="FunFam" id="1.25.10.10:FF:000291">
    <property type="entry name" value="Cytokinesis protein sepA"/>
    <property type="match status" value="1"/>
</dbReference>
<dbReference type="FunFam" id="6.10.30.50:FF:000001">
    <property type="entry name" value="Cytokinesis sepA protein"/>
    <property type="match status" value="1"/>
</dbReference>
<dbReference type="Gene3D" id="6.10.30.50">
    <property type="match status" value="1"/>
</dbReference>
<dbReference type="Gene3D" id="1.20.58.2220">
    <property type="entry name" value="Formin, FH2 domain"/>
    <property type="match status" value="1"/>
</dbReference>
<dbReference type="Gene3D" id="1.10.238.150">
    <property type="entry name" value="Formin, FH3 diaphanous domain"/>
    <property type="match status" value="1"/>
</dbReference>
<dbReference type="Gene3D" id="1.25.10.10">
    <property type="entry name" value="Leucine-rich Repeat Variant"/>
    <property type="match status" value="1"/>
</dbReference>
<dbReference type="InterPro" id="IPR051661">
    <property type="entry name" value="Actin_filament_regulator"/>
</dbReference>
<dbReference type="InterPro" id="IPR011989">
    <property type="entry name" value="ARM-like"/>
</dbReference>
<dbReference type="InterPro" id="IPR016024">
    <property type="entry name" value="ARM-type_fold"/>
</dbReference>
<dbReference type="InterPro" id="IPR014767">
    <property type="entry name" value="DAD_dom"/>
</dbReference>
<dbReference type="InterPro" id="IPR015425">
    <property type="entry name" value="FH2_Formin"/>
</dbReference>
<dbReference type="InterPro" id="IPR042201">
    <property type="entry name" value="FH2_Formin_sf"/>
</dbReference>
<dbReference type="InterPro" id="IPR010472">
    <property type="entry name" value="FH3_dom"/>
</dbReference>
<dbReference type="InterPro" id="IPR014768">
    <property type="entry name" value="GBD/FH3_dom"/>
</dbReference>
<dbReference type="InterPro" id="IPR010473">
    <property type="entry name" value="GTPase-bd"/>
</dbReference>
<dbReference type="PANTHER" id="PTHR47102">
    <property type="entry name" value="PROTEIN BNI1"/>
    <property type="match status" value="1"/>
</dbReference>
<dbReference type="PANTHER" id="PTHR47102:SF2">
    <property type="entry name" value="PROTEIN BNI1"/>
    <property type="match status" value="1"/>
</dbReference>
<dbReference type="Pfam" id="PF06367">
    <property type="entry name" value="Drf_FH3"/>
    <property type="match status" value="1"/>
</dbReference>
<dbReference type="Pfam" id="PF06371">
    <property type="entry name" value="Drf_GBD"/>
    <property type="match status" value="1"/>
</dbReference>
<dbReference type="Pfam" id="PF02181">
    <property type="entry name" value="FH2"/>
    <property type="match status" value="1"/>
</dbReference>
<dbReference type="SMART" id="SM01139">
    <property type="entry name" value="Drf_FH3"/>
    <property type="match status" value="1"/>
</dbReference>
<dbReference type="SMART" id="SM01140">
    <property type="entry name" value="Drf_GBD"/>
    <property type="match status" value="1"/>
</dbReference>
<dbReference type="SMART" id="SM00498">
    <property type="entry name" value="FH2"/>
    <property type="match status" value="1"/>
</dbReference>
<dbReference type="SUPFAM" id="SSF48371">
    <property type="entry name" value="ARM repeat"/>
    <property type="match status" value="1"/>
</dbReference>
<dbReference type="SUPFAM" id="SSF101447">
    <property type="entry name" value="Formin homology 2 domain (FH2 domain)"/>
    <property type="match status" value="1"/>
</dbReference>
<dbReference type="PROSITE" id="PS51231">
    <property type="entry name" value="DAD"/>
    <property type="match status" value="1"/>
</dbReference>
<dbReference type="PROSITE" id="PS51444">
    <property type="entry name" value="FH2"/>
    <property type="match status" value="1"/>
</dbReference>
<dbReference type="PROSITE" id="PS51232">
    <property type="entry name" value="GBD_FH3"/>
    <property type="match status" value="1"/>
</dbReference>
<feature type="chain" id="PRO_0000194903" description="Cytokinesis protein sepA">
    <location>
        <begin position="1"/>
        <end position="1790"/>
    </location>
</feature>
<feature type="domain" description="GBD/FH3" evidence="4">
    <location>
        <begin position="274"/>
        <end position="702"/>
    </location>
</feature>
<feature type="domain" description="FH1">
    <location>
        <begin position="955"/>
        <end position="1136"/>
    </location>
</feature>
<feature type="domain" description="FH2" evidence="5">
    <location>
        <begin position="1141"/>
        <end position="1564"/>
    </location>
</feature>
<feature type="domain" description="DAD" evidence="3">
    <location>
        <begin position="1581"/>
        <end position="1613"/>
    </location>
</feature>
<feature type="region of interest" description="Disordered" evidence="6">
    <location>
        <begin position="1"/>
        <end position="275"/>
    </location>
</feature>
<feature type="region of interest" description="Disordered" evidence="6">
    <location>
        <begin position="328"/>
        <end position="350"/>
    </location>
</feature>
<feature type="region of interest" description="Disordered" evidence="6">
    <location>
        <begin position="975"/>
        <end position="1119"/>
    </location>
</feature>
<feature type="region of interest" description="Disordered" evidence="6">
    <location>
        <begin position="1465"/>
        <end position="1484"/>
    </location>
</feature>
<feature type="region of interest" description="Disordered" evidence="6">
    <location>
        <begin position="1596"/>
        <end position="1790"/>
    </location>
</feature>
<feature type="coiled-coil region" evidence="2">
    <location>
        <begin position="724"/>
        <end position="811"/>
    </location>
</feature>
<feature type="coiled-coil region" evidence="2">
    <location>
        <begin position="1435"/>
        <end position="1566"/>
    </location>
</feature>
<feature type="compositionally biased region" description="Basic and acidic residues" evidence="6">
    <location>
        <begin position="24"/>
        <end position="35"/>
    </location>
</feature>
<feature type="compositionally biased region" description="Low complexity" evidence="6">
    <location>
        <begin position="39"/>
        <end position="62"/>
    </location>
</feature>
<feature type="compositionally biased region" description="Low complexity" evidence="6">
    <location>
        <begin position="187"/>
        <end position="203"/>
    </location>
</feature>
<feature type="compositionally biased region" description="Polar residues" evidence="6">
    <location>
        <begin position="205"/>
        <end position="236"/>
    </location>
</feature>
<feature type="compositionally biased region" description="Basic and acidic residues" evidence="6">
    <location>
        <begin position="328"/>
        <end position="341"/>
    </location>
</feature>
<feature type="compositionally biased region" description="Basic and acidic residues" evidence="6">
    <location>
        <begin position="975"/>
        <end position="986"/>
    </location>
</feature>
<feature type="compositionally biased region" description="Pro residues" evidence="6">
    <location>
        <begin position="1015"/>
        <end position="1026"/>
    </location>
</feature>
<feature type="compositionally biased region" description="Pro residues" evidence="6">
    <location>
        <begin position="1033"/>
        <end position="1118"/>
    </location>
</feature>
<feature type="compositionally biased region" description="Basic residues" evidence="6">
    <location>
        <begin position="1608"/>
        <end position="1620"/>
    </location>
</feature>
<feature type="compositionally biased region" description="Polar residues" evidence="6">
    <location>
        <begin position="1644"/>
        <end position="1661"/>
    </location>
</feature>
<feature type="compositionally biased region" description="Basic and acidic residues" evidence="6">
    <location>
        <begin position="1694"/>
        <end position="1710"/>
    </location>
</feature>
<feature type="compositionally biased region" description="Polar residues" evidence="6">
    <location>
        <begin position="1720"/>
        <end position="1746"/>
    </location>
</feature>
<feature type="sequence conflict" description="In Ref. 3; EAA57863/CBF70912." evidence="8" ref="3">
    <location>
        <position position="713"/>
    </location>
</feature>
<feature type="sequence conflict" description="In Ref. 5; AAA33306." evidence="8" ref="5">
    <original>P</original>
    <variation>T</variation>
    <location>
        <position position="1104"/>
    </location>
</feature>
<feature type="sequence conflict" description="In Ref. 5; AAA33306." evidence="8" ref="5">
    <original>D</original>
    <variation>V</variation>
    <location>
        <position position="1476"/>
    </location>
</feature>
<feature type="sequence conflict" description="In Ref. 5; AAA33306." evidence="8" ref="5">
    <original>V</original>
    <variation>L</variation>
    <location>
        <position position="1504"/>
    </location>
</feature>